<gene>
    <name evidence="1" type="primary">thyA</name>
    <name type="ordered locus">ECIAI39_3246</name>
</gene>
<reference key="1">
    <citation type="journal article" date="2009" name="PLoS Genet.">
        <title>Organised genome dynamics in the Escherichia coli species results in highly diverse adaptive paths.</title>
        <authorList>
            <person name="Touchon M."/>
            <person name="Hoede C."/>
            <person name="Tenaillon O."/>
            <person name="Barbe V."/>
            <person name="Baeriswyl S."/>
            <person name="Bidet P."/>
            <person name="Bingen E."/>
            <person name="Bonacorsi S."/>
            <person name="Bouchier C."/>
            <person name="Bouvet O."/>
            <person name="Calteau A."/>
            <person name="Chiapello H."/>
            <person name="Clermont O."/>
            <person name="Cruveiller S."/>
            <person name="Danchin A."/>
            <person name="Diard M."/>
            <person name="Dossat C."/>
            <person name="Karoui M.E."/>
            <person name="Frapy E."/>
            <person name="Garry L."/>
            <person name="Ghigo J.M."/>
            <person name="Gilles A.M."/>
            <person name="Johnson J."/>
            <person name="Le Bouguenec C."/>
            <person name="Lescat M."/>
            <person name="Mangenot S."/>
            <person name="Martinez-Jehanne V."/>
            <person name="Matic I."/>
            <person name="Nassif X."/>
            <person name="Oztas S."/>
            <person name="Petit M.A."/>
            <person name="Pichon C."/>
            <person name="Rouy Z."/>
            <person name="Ruf C.S."/>
            <person name="Schneider D."/>
            <person name="Tourret J."/>
            <person name="Vacherie B."/>
            <person name="Vallenet D."/>
            <person name="Medigue C."/>
            <person name="Rocha E.P.C."/>
            <person name="Denamur E."/>
        </authorList>
    </citation>
    <scope>NUCLEOTIDE SEQUENCE [LARGE SCALE GENOMIC DNA]</scope>
    <source>
        <strain>IAI39 / ExPEC</strain>
    </source>
</reference>
<organism>
    <name type="scientific">Escherichia coli O7:K1 (strain IAI39 / ExPEC)</name>
    <dbReference type="NCBI Taxonomy" id="585057"/>
    <lineage>
        <taxon>Bacteria</taxon>
        <taxon>Pseudomonadati</taxon>
        <taxon>Pseudomonadota</taxon>
        <taxon>Gammaproteobacteria</taxon>
        <taxon>Enterobacterales</taxon>
        <taxon>Enterobacteriaceae</taxon>
        <taxon>Escherichia</taxon>
    </lineage>
</organism>
<keyword id="KW-0963">Cytoplasm</keyword>
<keyword id="KW-0489">Methyltransferase</keyword>
<keyword id="KW-0545">Nucleotide biosynthesis</keyword>
<keyword id="KW-0808">Transferase</keyword>
<sequence length="264" mass="30480">MKQYLELMQKVLDEGTQKNDRTGTGTLSIFGHQMRFNLQDGFPLVTTKRCHLRSIIHELLWFLQGDTNIAYLHENNVTIWDEWADENGDLGPVYGKQWRAWPTPDGRHIDQITTVLNQLKNDPDSRRIIVSAWNVGELDKMALAPCHAFFQFYVADGKLSCQLYQRSCDVFLGLPFNIASYALLVHMMAQQCDLEVGDFVWTGGDTHLYSNHMDQTHLQLSREPRPLPKLIIKRKPESIFDYRFEDFEIEGYDPHPGIKAPVAI</sequence>
<comment type="function">
    <text evidence="1">Catalyzes the reductive methylation of 2'-deoxyuridine-5'-monophosphate (dUMP) to 2'-deoxythymidine-5'-monophosphate (dTMP) while utilizing 5,10-methylenetetrahydrofolate (mTHF) as the methyl donor and reductant in the reaction, yielding dihydrofolate (DHF) as a by-product. This enzymatic reaction provides an intracellular de novo source of dTMP, an essential precursor for DNA biosynthesis.</text>
</comment>
<comment type="catalytic activity">
    <reaction evidence="1">
        <text>dUMP + (6R)-5,10-methylene-5,6,7,8-tetrahydrofolate = 7,8-dihydrofolate + dTMP</text>
        <dbReference type="Rhea" id="RHEA:12104"/>
        <dbReference type="ChEBI" id="CHEBI:15636"/>
        <dbReference type="ChEBI" id="CHEBI:57451"/>
        <dbReference type="ChEBI" id="CHEBI:63528"/>
        <dbReference type="ChEBI" id="CHEBI:246422"/>
        <dbReference type="EC" id="2.1.1.45"/>
    </reaction>
</comment>
<comment type="pathway">
    <text evidence="1">Pyrimidine metabolism; dTTP biosynthesis.</text>
</comment>
<comment type="subunit">
    <text evidence="1">Homodimer.</text>
</comment>
<comment type="subcellular location">
    <subcellularLocation>
        <location evidence="1">Cytoplasm</location>
    </subcellularLocation>
</comment>
<comment type="similarity">
    <text evidence="1">Belongs to the thymidylate synthase family. Bacterial-type ThyA subfamily.</text>
</comment>
<name>TYSY_ECO7I</name>
<dbReference type="EC" id="2.1.1.45" evidence="1"/>
<dbReference type="EMBL" id="CU928164">
    <property type="protein sequence ID" value="CAR19365.1"/>
    <property type="molecule type" value="Genomic_DNA"/>
</dbReference>
<dbReference type="RefSeq" id="WP_000816232.1">
    <property type="nucleotide sequence ID" value="NC_011750.1"/>
</dbReference>
<dbReference type="RefSeq" id="YP_002409170.1">
    <property type="nucleotide sequence ID" value="NC_011750.1"/>
</dbReference>
<dbReference type="SMR" id="B7NVX2"/>
<dbReference type="STRING" id="585057.ECIAI39_3246"/>
<dbReference type="GeneID" id="93779171"/>
<dbReference type="KEGG" id="ect:ECIAI39_3246"/>
<dbReference type="PATRIC" id="fig|585057.6.peg.3373"/>
<dbReference type="HOGENOM" id="CLU_021669_0_0_6"/>
<dbReference type="UniPathway" id="UPA00575"/>
<dbReference type="Proteomes" id="UP000000749">
    <property type="component" value="Chromosome"/>
</dbReference>
<dbReference type="GO" id="GO:0005829">
    <property type="term" value="C:cytosol"/>
    <property type="evidence" value="ECO:0007669"/>
    <property type="project" value="TreeGrafter"/>
</dbReference>
<dbReference type="GO" id="GO:0004799">
    <property type="term" value="F:thymidylate synthase activity"/>
    <property type="evidence" value="ECO:0007669"/>
    <property type="project" value="UniProtKB-UniRule"/>
</dbReference>
<dbReference type="GO" id="GO:0006231">
    <property type="term" value="P:dTMP biosynthetic process"/>
    <property type="evidence" value="ECO:0007669"/>
    <property type="project" value="UniProtKB-UniRule"/>
</dbReference>
<dbReference type="GO" id="GO:0006235">
    <property type="term" value="P:dTTP biosynthetic process"/>
    <property type="evidence" value="ECO:0007669"/>
    <property type="project" value="UniProtKB-UniRule"/>
</dbReference>
<dbReference type="GO" id="GO:0032259">
    <property type="term" value="P:methylation"/>
    <property type="evidence" value="ECO:0007669"/>
    <property type="project" value="UniProtKB-KW"/>
</dbReference>
<dbReference type="CDD" id="cd00351">
    <property type="entry name" value="TS_Pyrimidine_HMase"/>
    <property type="match status" value="1"/>
</dbReference>
<dbReference type="FunFam" id="3.30.572.10:FF:000001">
    <property type="entry name" value="Thymidylate synthase"/>
    <property type="match status" value="1"/>
</dbReference>
<dbReference type="Gene3D" id="3.30.572.10">
    <property type="entry name" value="Thymidylate synthase/dCMP hydroxymethylase domain"/>
    <property type="match status" value="1"/>
</dbReference>
<dbReference type="HAMAP" id="MF_00008">
    <property type="entry name" value="Thymidy_synth_bact"/>
    <property type="match status" value="1"/>
</dbReference>
<dbReference type="InterPro" id="IPR045097">
    <property type="entry name" value="Thymidate_synth/dCMP_Mease"/>
</dbReference>
<dbReference type="InterPro" id="IPR023451">
    <property type="entry name" value="Thymidate_synth/dCMP_Mease_dom"/>
</dbReference>
<dbReference type="InterPro" id="IPR036926">
    <property type="entry name" value="Thymidate_synth/dCMP_Mease_sf"/>
</dbReference>
<dbReference type="InterPro" id="IPR000398">
    <property type="entry name" value="Thymidylate_synthase"/>
</dbReference>
<dbReference type="InterPro" id="IPR020940">
    <property type="entry name" value="Thymidylate_synthase_AS"/>
</dbReference>
<dbReference type="NCBIfam" id="NF002497">
    <property type="entry name" value="PRK01827.1-3"/>
    <property type="match status" value="1"/>
</dbReference>
<dbReference type="NCBIfam" id="NF002499">
    <property type="entry name" value="PRK01827.1-5"/>
    <property type="match status" value="1"/>
</dbReference>
<dbReference type="NCBIfam" id="TIGR03284">
    <property type="entry name" value="thym_sym"/>
    <property type="match status" value="2"/>
</dbReference>
<dbReference type="PANTHER" id="PTHR11548:SF9">
    <property type="entry name" value="THYMIDYLATE SYNTHASE"/>
    <property type="match status" value="1"/>
</dbReference>
<dbReference type="PANTHER" id="PTHR11548">
    <property type="entry name" value="THYMIDYLATE SYNTHASE 1"/>
    <property type="match status" value="1"/>
</dbReference>
<dbReference type="Pfam" id="PF00303">
    <property type="entry name" value="Thymidylat_synt"/>
    <property type="match status" value="1"/>
</dbReference>
<dbReference type="PRINTS" id="PR00108">
    <property type="entry name" value="THYMDSNTHASE"/>
</dbReference>
<dbReference type="SUPFAM" id="SSF55831">
    <property type="entry name" value="Thymidylate synthase/dCMP hydroxymethylase"/>
    <property type="match status" value="1"/>
</dbReference>
<dbReference type="PROSITE" id="PS00091">
    <property type="entry name" value="THYMIDYLATE_SYNTHASE"/>
    <property type="match status" value="1"/>
</dbReference>
<protein>
    <recommendedName>
        <fullName evidence="1">Thymidylate synthase</fullName>
        <shortName evidence="1">TS</shortName>
        <shortName evidence="1">TSase</shortName>
        <ecNumber evidence="1">2.1.1.45</ecNumber>
    </recommendedName>
</protein>
<evidence type="ECO:0000255" key="1">
    <source>
        <dbReference type="HAMAP-Rule" id="MF_00008"/>
    </source>
</evidence>
<proteinExistence type="inferred from homology"/>
<accession>B7NVX2</accession>
<feature type="chain" id="PRO_1000197244" description="Thymidylate synthase">
    <location>
        <begin position="1"/>
        <end position="264"/>
    </location>
</feature>
<feature type="active site" description="Nucleophile" evidence="1">
    <location>
        <position position="146"/>
    </location>
</feature>
<feature type="binding site" description="in other chain" evidence="1">
    <location>
        <position position="21"/>
    </location>
    <ligand>
        <name>dUMP</name>
        <dbReference type="ChEBI" id="CHEBI:246422"/>
        <note>ligand shared between dimeric partners</note>
    </ligand>
</feature>
<feature type="binding site" evidence="1">
    <location>
        <position position="51"/>
    </location>
    <ligand>
        <name>(6R)-5,10-methylene-5,6,7,8-tetrahydrofolate</name>
        <dbReference type="ChEBI" id="CHEBI:15636"/>
    </ligand>
</feature>
<feature type="binding site" evidence="1">
    <location>
        <begin position="126"/>
        <end position="127"/>
    </location>
    <ligand>
        <name>dUMP</name>
        <dbReference type="ChEBI" id="CHEBI:246422"/>
        <note>ligand shared between dimeric partners</note>
    </ligand>
</feature>
<feature type="binding site" description="in other chain" evidence="1">
    <location>
        <begin position="166"/>
        <end position="169"/>
    </location>
    <ligand>
        <name>dUMP</name>
        <dbReference type="ChEBI" id="CHEBI:246422"/>
        <note>ligand shared between dimeric partners</note>
    </ligand>
</feature>
<feature type="binding site" evidence="1">
    <location>
        <position position="169"/>
    </location>
    <ligand>
        <name>(6R)-5,10-methylene-5,6,7,8-tetrahydrofolate</name>
        <dbReference type="ChEBI" id="CHEBI:15636"/>
    </ligand>
</feature>
<feature type="binding site" description="in other chain" evidence="1">
    <location>
        <position position="177"/>
    </location>
    <ligand>
        <name>dUMP</name>
        <dbReference type="ChEBI" id="CHEBI:246422"/>
        <note>ligand shared between dimeric partners</note>
    </ligand>
</feature>
<feature type="binding site" description="in other chain" evidence="1">
    <location>
        <begin position="207"/>
        <end position="209"/>
    </location>
    <ligand>
        <name>dUMP</name>
        <dbReference type="ChEBI" id="CHEBI:246422"/>
        <note>ligand shared between dimeric partners</note>
    </ligand>
</feature>
<feature type="binding site" evidence="1">
    <location>
        <position position="263"/>
    </location>
    <ligand>
        <name>(6R)-5,10-methylene-5,6,7,8-tetrahydrofolate</name>
        <dbReference type="ChEBI" id="CHEBI:15636"/>
    </ligand>
</feature>